<feature type="chain" id="PRO_0000171359" description="tRNA (guanine-N(7)-)-methyltransferase">
    <location>
        <begin position="1"/>
        <end position="210"/>
    </location>
</feature>
<feature type="active site" evidence="1">
    <location>
        <position position="112"/>
    </location>
</feature>
<feature type="binding site" evidence="2">
    <location>
        <position position="36"/>
    </location>
    <ligand>
        <name>S-adenosyl-L-methionine</name>
        <dbReference type="ChEBI" id="CHEBI:59789"/>
    </ligand>
</feature>
<feature type="binding site" evidence="2">
    <location>
        <position position="61"/>
    </location>
    <ligand>
        <name>S-adenosyl-L-methionine</name>
        <dbReference type="ChEBI" id="CHEBI:59789"/>
    </ligand>
</feature>
<feature type="binding site" evidence="2">
    <location>
        <position position="90"/>
    </location>
    <ligand>
        <name>S-adenosyl-L-methionine</name>
        <dbReference type="ChEBI" id="CHEBI:59789"/>
    </ligand>
</feature>
<feature type="binding site" evidence="2">
    <location>
        <position position="112"/>
    </location>
    <ligand>
        <name>S-adenosyl-L-methionine</name>
        <dbReference type="ChEBI" id="CHEBI:59789"/>
    </ligand>
</feature>
<feature type="binding site" evidence="2">
    <location>
        <position position="116"/>
    </location>
    <ligand>
        <name>substrate</name>
    </ligand>
</feature>
<feature type="binding site" evidence="2">
    <location>
        <position position="148"/>
    </location>
    <ligand>
        <name>substrate</name>
    </ligand>
</feature>
<feature type="binding site" evidence="2">
    <location>
        <begin position="188"/>
        <end position="191"/>
    </location>
    <ligand>
        <name>substrate</name>
    </ligand>
</feature>
<name>TRMB_MYCPN</name>
<comment type="function">
    <text evidence="2">Catalyzes the formation of N(7)-methylguanine at position 46 (m7G46) in tRNA.</text>
</comment>
<comment type="catalytic activity">
    <reaction evidence="2">
        <text>guanosine(46) in tRNA + S-adenosyl-L-methionine = N(7)-methylguanosine(46) in tRNA + S-adenosyl-L-homocysteine</text>
        <dbReference type="Rhea" id="RHEA:42708"/>
        <dbReference type="Rhea" id="RHEA-COMP:10188"/>
        <dbReference type="Rhea" id="RHEA-COMP:10189"/>
        <dbReference type="ChEBI" id="CHEBI:57856"/>
        <dbReference type="ChEBI" id="CHEBI:59789"/>
        <dbReference type="ChEBI" id="CHEBI:74269"/>
        <dbReference type="ChEBI" id="CHEBI:74480"/>
        <dbReference type="EC" id="2.1.1.33"/>
    </reaction>
</comment>
<comment type="pathway">
    <text evidence="2">tRNA modification; N(7)-methylguanine-tRNA biosynthesis.</text>
</comment>
<comment type="similarity">
    <text evidence="2">Belongs to the class I-like SAM-binding methyltransferase superfamily. TrmB family.</text>
</comment>
<sequence length="210" mass="24542">MRLRKVKDALVRVQDSPYFSNPEQLSTIESESLFVEIGCGKSWFLSQQAQQNPKCFFVGIEREPTIVLKAINKVNRLEVKPRNLLITCLDANQLTEYLKPQSISKIFINFPDPWPKKRHTLRRLTAPHFLKQFHQLLKKQGLIEFKTDNDQLFEFTLEVLQKTVAHFKIIEQTTDLHNSPLTSTNIMTEYEQRFVSLGVKIKKLTLEKLN</sequence>
<keyword id="KW-0489">Methyltransferase</keyword>
<keyword id="KW-1185">Reference proteome</keyword>
<keyword id="KW-0949">S-adenosyl-L-methionine</keyword>
<keyword id="KW-0808">Transferase</keyword>
<keyword id="KW-0819">tRNA processing</keyword>
<proteinExistence type="inferred from homology"/>
<reference key="1">
    <citation type="journal article" date="1996" name="Nucleic Acids Res.">
        <title>Complete sequence analysis of the genome of the bacterium Mycoplasma pneumoniae.</title>
        <authorList>
            <person name="Himmelreich R."/>
            <person name="Hilbert H."/>
            <person name="Plagens H."/>
            <person name="Pirkl E."/>
            <person name="Li B.-C."/>
            <person name="Herrmann R."/>
        </authorList>
    </citation>
    <scope>NUCLEOTIDE SEQUENCE [LARGE SCALE GENOMIC DNA]</scope>
    <source>
        <strain>ATCC 29342 / M129 / Subtype 1</strain>
    </source>
</reference>
<organism>
    <name type="scientific">Mycoplasma pneumoniae (strain ATCC 29342 / M129 / Subtype 1)</name>
    <name type="common">Mycoplasmoides pneumoniae</name>
    <dbReference type="NCBI Taxonomy" id="272634"/>
    <lineage>
        <taxon>Bacteria</taxon>
        <taxon>Bacillati</taxon>
        <taxon>Mycoplasmatota</taxon>
        <taxon>Mycoplasmoidales</taxon>
        <taxon>Mycoplasmoidaceae</taxon>
        <taxon>Mycoplasmoides</taxon>
    </lineage>
</organism>
<accession>P75256</accession>
<evidence type="ECO:0000250" key="1"/>
<evidence type="ECO:0000255" key="2">
    <source>
        <dbReference type="HAMAP-Rule" id="MF_01057"/>
    </source>
</evidence>
<gene>
    <name evidence="2" type="primary">trmB</name>
    <name type="ordered locus">MPN_522</name>
    <name type="ORF">G12_orf210V</name>
    <name type="ORF">MP320</name>
</gene>
<dbReference type="EC" id="2.1.1.33" evidence="2"/>
<dbReference type="EMBL" id="U00089">
    <property type="protein sequence ID" value="AAB95968.1"/>
    <property type="molecule type" value="Genomic_DNA"/>
</dbReference>
<dbReference type="PIR" id="S73646">
    <property type="entry name" value="S73646"/>
</dbReference>
<dbReference type="RefSeq" id="NP_110210.1">
    <property type="nucleotide sequence ID" value="NC_000912.1"/>
</dbReference>
<dbReference type="RefSeq" id="WP_010874878.1">
    <property type="nucleotide sequence ID" value="NZ_OU342337.1"/>
</dbReference>
<dbReference type="SMR" id="P75256"/>
<dbReference type="STRING" id="272634.MPN_522"/>
<dbReference type="EnsemblBacteria" id="AAB95968">
    <property type="protein sequence ID" value="AAB95968"/>
    <property type="gene ID" value="MPN_522"/>
</dbReference>
<dbReference type="KEGG" id="mpn:MPN_522"/>
<dbReference type="PATRIC" id="fig|272634.6.peg.579"/>
<dbReference type="HOGENOM" id="CLU_050910_2_1_14"/>
<dbReference type="OrthoDB" id="9802090at2"/>
<dbReference type="BioCyc" id="MPNE272634:G1GJ3-858-MONOMER"/>
<dbReference type="UniPathway" id="UPA00989"/>
<dbReference type="Proteomes" id="UP000000808">
    <property type="component" value="Chromosome"/>
</dbReference>
<dbReference type="GO" id="GO:0043527">
    <property type="term" value="C:tRNA methyltransferase complex"/>
    <property type="evidence" value="ECO:0007669"/>
    <property type="project" value="TreeGrafter"/>
</dbReference>
<dbReference type="GO" id="GO:0008176">
    <property type="term" value="F:tRNA (guanine(46)-N7)-methyltransferase activity"/>
    <property type="evidence" value="ECO:0007669"/>
    <property type="project" value="UniProtKB-UniRule"/>
</dbReference>
<dbReference type="CDD" id="cd02440">
    <property type="entry name" value="AdoMet_MTases"/>
    <property type="match status" value="1"/>
</dbReference>
<dbReference type="Gene3D" id="3.40.50.150">
    <property type="entry name" value="Vaccinia Virus protein VP39"/>
    <property type="match status" value="1"/>
</dbReference>
<dbReference type="HAMAP" id="MF_01057">
    <property type="entry name" value="tRNA_methyltr_TrmB"/>
    <property type="match status" value="1"/>
</dbReference>
<dbReference type="InterPro" id="IPR029063">
    <property type="entry name" value="SAM-dependent_MTases_sf"/>
</dbReference>
<dbReference type="InterPro" id="IPR003358">
    <property type="entry name" value="tRNA_(Gua-N-7)_MeTrfase_Trmb"/>
</dbReference>
<dbReference type="InterPro" id="IPR055361">
    <property type="entry name" value="tRNA_methyltr_TrmB_bact"/>
</dbReference>
<dbReference type="NCBIfam" id="NF001080">
    <property type="entry name" value="PRK00121.2-2"/>
    <property type="match status" value="1"/>
</dbReference>
<dbReference type="NCBIfam" id="TIGR00091">
    <property type="entry name" value="tRNA (guanosine(46)-N7)-methyltransferase TrmB"/>
    <property type="match status" value="1"/>
</dbReference>
<dbReference type="PANTHER" id="PTHR23417">
    <property type="entry name" value="3-DEOXY-D-MANNO-OCTULOSONIC-ACID TRANSFERASE/TRNA GUANINE-N 7 - -METHYLTRANSFERASE"/>
    <property type="match status" value="1"/>
</dbReference>
<dbReference type="PANTHER" id="PTHR23417:SF14">
    <property type="entry name" value="PENTACOTRIPEPTIDE-REPEAT REGION OF PRORP DOMAIN-CONTAINING PROTEIN"/>
    <property type="match status" value="1"/>
</dbReference>
<dbReference type="Pfam" id="PF02390">
    <property type="entry name" value="Methyltransf_4"/>
    <property type="match status" value="1"/>
</dbReference>
<dbReference type="SUPFAM" id="SSF53335">
    <property type="entry name" value="S-adenosyl-L-methionine-dependent methyltransferases"/>
    <property type="match status" value="1"/>
</dbReference>
<dbReference type="PROSITE" id="PS51625">
    <property type="entry name" value="SAM_MT_TRMB"/>
    <property type="match status" value="1"/>
</dbReference>
<protein>
    <recommendedName>
        <fullName evidence="2">tRNA (guanine-N(7)-)-methyltransferase</fullName>
        <ecNumber evidence="2">2.1.1.33</ecNumber>
    </recommendedName>
    <alternativeName>
        <fullName evidence="2">tRNA (guanine(46)-N(7))-methyltransferase</fullName>
    </alternativeName>
    <alternativeName>
        <fullName evidence="2">tRNA(m7G46)-methyltransferase</fullName>
    </alternativeName>
</protein>